<proteinExistence type="evidence at transcript level"/>
<comment type="function">
    <text evidence="2">This enzyme is involved in the de novo synthesis of CTP, a precursor of DNA, RNA and phospholipids. Catalyzes the ATP-dependent amination of UTP to CTP with either L-glutamine or ammonia as a source of nitrogen.</text>
</comment>
<comment type="catalytic activity">
    <reaction evidence="2">
        <text>UTP + L-glutamine + ATP + H2O = CTP + L-glutamate + ADP + phosphate + 2 H(+)</text>
        <dbReference type="Rhea" id="RHEA:26426"/>
        <dbReference type="ChEBI" id="CHEBI:15377"/>
        <dbReference type="ChEBI" id="CHEBI:15378"/>
        <dbReference type="ChEBI" id="CHEBI:29985"/>
        <dbReference type="ChEBI" id="CHEBI:30616"/>
        <dbReference type="ChEBI" id="CHEBI:37563"/>
        <dbReference type="ChEBI" id="CHEBI:43474"/>
        <dbReference type="ChEBI" id="CHEBI:46398"/>
        <dbReference type="ChEBI" id="CHEBI:58359"/>
        <dbReference type="ChEBI" id="CHEBI:456216"/>
        <dbReference type="EC" id="6.3.4.2"/>
    </reaction>
</comment>
<comment type="pathway">
    <text evidence="2">Pyrimidine metabolism; CTP biosynthesis via de novo pathway; CTP from UDP: step 2/2.</text>
</comment>
<comment type="similarity">
    <text evidence="4">Belongs to the CTP synthase family.</text>
</comment>
<evidence type="ECO:0000250" key="1"/>
<evidence type="ECO:0000250" key="2">
    <source>
        <dbReference type="UniProtKB" id="P17812"/>
    </source>
</evidence>
<evidence type="ECO:0000256" key="3">
    <source>
        <dbReference type="SAM" id="MobiDB-lite"/>
    </source>
</evidence>
<evidence type="ECO:0000305" key="4"/>
<reference key="1">
    <citation type="submission" date="2003-01" db="EMBL/GenBank/DDBJ databases">
        <authorList>
            <consortium name="NIH - Xenopus Gene Collection (XGC) project"/>
        </authorList>
    </citation>
    <scope>NUCLEOTIDE SEQUENCE [LARGE SCALE MRNA]</scope>
    <source>
        <tissue>Embryo</tissue>
    </source>
</reference>
<protein>
    <recommendedName>
        <fullName evidence="4">CTP synthase 1-B</fullName>
        <ecNumber evidence="2">6.3.4.2</ecNumber>
    </recommendedName>
    <alternativeName>
        <fullName>CTP synthetase 1-B</fullName>
    </alternativeName>
    <alternativeName>
        <fullName>UTP--ammonia ligase 1-B</fullName>
    </alternativeName>
</protein>
<dbReference type="EC" id="6.3.4.2" evidence="2"/>
<dbReference type="EMBL" id="BC044325">
    <property type="protein sequence ID" value="AAH44325.1"/>
    <property type="molecule type" value="mRNA"/>
</dbReference>
<dbReference type="RefSeq" id="NP_001080188.1">
    <property type="nucleotide sequence ID" value="NM_001086719.1"/>
</dbReference>
<dbReference type="RefSeq" id="XP_018100292.1">
    <property type="nucleotide sequence ID" value="XM_018244803.1"/>
</dbReference>
<dbReference type="SMR" id="Q7ZXP9"/>
<dbReference type="DNASU" id="379880"/>
<dbReference type="GeneID" id="379880"/>
<dbReference type="KEGG" id="xla:379880"/>
<dbReference type="AGR" id="Xenbase:XB-GENE-957436"/>
<dbReference type="CTD" id="379880"/>
<dbReference type="Xenbase" id="XB-GENE-957436">
    <property type="gene designation" value="ctps1.L"/>
</dbReference>
<dbReference type="OMA" id="FFEVADC"/>
<dbReference type="OrthoDB" id="8954815at2759"/>
<dbReference type="UniPathway" id="UPA00159">
    <property type="reaction ID" value="UER00277"/>
</dbReference>
<dbReference type="Proteomes" id="UP000186698">
    <property type="component" value="Chromosome 2L"/>
</dbReference>
<dbReference type="Bgee" id="379880">
    <property type="expression patterns" value="Expressed in neurula embryo and 19 other cell types or tissues"/>
</dbReference>
<dbReference type="GO" id="GO:0097268">
    <property type="term" value="C:cytoophidium"/>
    <property type="evidence" value="ECO:0000318"/>
    <property type="project" value="GO_Central"/>
</dbReference>
<dbReference type="GO" id="GO:0005737">
    <property type="term" value="C:cytoplasm"/>
    <property type="evidence" value="ECO:0000318"/>
    <property type="project" value="GO_Central"/>
</dbReference>
<dbReference type="GO" id="GO:0005524">
    <property type="term" value="F:ATP binding"/>
    <property type="evidence" value="ECO:0007669"/>
    <property type="project" value="UniProtKB-KW"/>
</dbReference>
<dbReference type="GO" id="GO:0003883">
    <property type="term" value="F:CTP synthase activity"/>
    <property type="evidence" value="ECO:0000250"/>
    <property type="project" value="UniProtKB"/>
</dbReference>
<dbReference type="GO" id="GO:0042802">
    <property type="term" value="F:identical protein binding"/>
    <property type="evidence" value="ECO:0000318"/>
    <property type="project" value="GO_Central"/>
</dbReference>
<dbReference type="GO" id="GO:0044210">
    <property type="term" value="P:'de novo' CTP biosynthetic process"/>
    <property type="evidence" value="ECO:0007669"/>
    <property type="project" value="UniProtKB-UniPathway"/>
</dbReference>
<dbReference type="GO" id="GO:0006241">
    <property type="term" value="P:CTP biosynthetic process"/>
    <property type="evidence" value="ECO:0000250"/>
    <property type="project" value="UniProtKB"/>
</dbReference>
<dbReference type="GO" id="GO:0019856">
    <property type="term" value="P:pyrimidine nucleobase biosynthetic process"/>
    <property type="evidence" value="ECO:0000318"/>
    <property type="project" value="GO_Central"/>
</dbReference>
<dbReference type="CDD" id="cd03113">
    <property type="entry name" value="CTPS_N"/>
    <property type="match status" value="1"/>
</dbReference>
<dbReference type="CDD" id="cd01746">
    <property type="entry name" value="GATase1_CTP_Synthase"/>
    <property type="match status" value="1"/>
</dbReference>
<dbReference type="FunFam" id="3.40.50.300:FF:000207">
    <property type="entry name" value="CTP synthase"/>
    <property type="match status" value="1"/>
</dbReference>
<dbReference type="FunFam" id="3.40.50.880:FF:000005">
    <property type="entry name" value="CTP synthase"/>
    <property type="match status" value="1"/>
</dbReference>
<dbReference type="Gene3D" id="3.40.50.880">
    <property type="match status" value="1"/>
</dbReference>
<dbReference type="Gene3D" id="3.40.50.300">
    <property type="entry name" value="P-loop containing nucleotide triphosphate hydrolases"/>
    <property type="match status" value="1"/>
</dbReference>
<dbReference type="HAMAP" id="MF_01227">
    <property type="entry name" value="PyrG"/>
    <property type="match status" value="1"/>
</dbReference>
<dbReference type="InterPro" id="IPR029062">
    <property type="entry name" value="Class_I_gatase-like"/>
</dbReference>
<dbReference type="InterPro" id="IPR004468">
    <property type="entry name" value="CTP_synthase"/>
</dbReference>
<dbReference type="InterPro" id="IPR017456">
    <property type="entry name" value="CTP_synthase_N"/>
</dbReference>
<dbReference type="InterPro" id="IPR017926">
    <property type="entry name" value="GATASE"/>
</dbReference>
<dbReference type="InterPro" id="IPR033828">
    <property type="entry name" value="GATase1_CTP_Synthase"/>
</dbReference>
<dbReference type="InterPro" id="IPR027417">
    <property type="entry name" value="P-loop_NTPase"/>
</dbReference>
<dbReference type="NCBIfam" id="NF003792">
    <property type="entry name" value="PRK05380.1"/>
    <property type="match status" value="1"/>
</dbReference>
<dbReference type="NCBIfam" id="TIGR00337">
    <property type="entry name" value="PyrG"/>
    <property type="match status" value="1"/>
</dbReference>
<dbReference type="PANTHER" id="PTHR11550">
    <property type="entry name" value="CTP SYNTHASE"/>
    <property type="match status" value="1"/>
</dbReference>
<dbReference type="PANTHER" id="PTHR11550:SF8">
    <property type="entry name" value="CTP SYNTHASE 1"/>
    <property type="match status" value="1"/>
</dbReference>
<dbReference type="Pfam" id="PF06418">
    <property type="entry name" value="CTP_synth_N"/>
    <property type="match status" value="1"/>
</dbReference>
<dbReference type="Pfam" id="PF00117">
    <property type="entry name" value="GATase"/>
    <property type="match status" value="1"/>
</dbReference>
<dbReference type="SUPFAM" id="SSF52317">
    <property type="entry name" value="Class I glutamine amidotransferase-like"/>
    <property type="match status" value="1"/>
</dbReference>
<dbReference type="SUPFAM" id="SSF52540">
    <property type="entry name" value="P-loop containing nucleoside triphosphate hydrolases"/>
    <property type="match status" value="1"/>
</dbReference>
<dbReference type="PROSITE" id="PS51273">
    <property type="entry name" value="GATASE_TYPE_1"/>
    <property type="match status" value="1"/>
</dbReference>
<feature type="chain" id="PRO_0000247031" description="CTP synthase 1-B">
    <location>
        <begin position="1"/>
        <end position="591"/>
    </location>
</feature>
<feature type="domain" description="Glutamine amidotransferase type-1">
    <location>
        <begin position="300"/>
        <end position="554"/>
    </location>
</feature>
<feature type="region of interest" description="Disordered" evidence="3">
    <location>
        <begin position="562"/>
        <end position="581"/>
    </location>
</feature>
<feature type="compositionally biased region" description="Basic and acidic residues" evidence="3">
    <location>
        <begin position="562"/>
        <end position="572"/>
    </location>
</feature>
<feature type="active site" description="For GATase activity" evidence="1">
    <location>
        <position position="399"/>
    </location>
</feature>
<feature type="active site" description="For GATase activity" evidence="1">
    <location>
        <position position="526"/>
    </location>
</feature>
<feature type="active site" description="For GATase activity" evidence="1">
    <location>
        <position position="528"/>
    </location>
</feature>
<accession>Q7ZXP9</accession>
<gene>
    <name type="primary">ctps1-b</name>
</gene>
<organism>
    <name type="scientific">Xenopus laevis</name>
    <name type="common">African clawed frog</name>
    <dbReference type="NCBI Taxonomy" id="8355"/>
    <lineage>
        <taxon>Eukaryota</taxon>
        <taxon>Metazoa</taxon>
        <taxon>Chordata</taxon>
        <taxon>Craniata</taxon>
        <taxon>Vertebrata</taxon>
        <taxon>Euteleostomi</taxon>
        <taxon>Amphibia</taxon>
        <taxon>Batrachia</taxon>
        <taxon>Anura</taxon>
        <taxon>Pipoidea</taxon>
        <taxon>Pipidae</taxon>
        <taxon>Xenopodinae</taxon>
        <taxon>Xenopus</taxon>
        <taxon>Xenopus</taxon>
    </lineage>
</organism>
<sequence length="591" mass="66887">MKYILVTGGVISGIGKGVIASSVGTILKSSNLHVTSIKIDPYINIDAGTFSPYEHGEVFVLDDGGEVDLDLGNYERFLDIRLTKDNNLTTGKIYQSVINKERKGDYLGKTVQVVPHITEAIQEWVMRQALIPVDEDGIEPEVCVIELGGTVGDIESMPFVEAFRQFQFKARRENFCNIHVSLVPQPSATGEQKTKPTQNSVRELRGLGLSPDLVVCRCSTPLDTSVKEKISMFCHVEPQQVICVHDVSSIYRVPLLLEEQGVVDYFRQRLDLPIGRQPRRLLMKWKEMADRYERLLESCSIALVGKYTKFSDSYASVIKALEHSALAINHRLEIKYIDSADLEQETLQEEPVRYHEAWQKLCSSDGILVPGGFGVRGTEGKIQAIAWARKQKKPFLGVCLGMQLAVVEFARDVLDWKDANSTEFNPKTSHPVVIDMPEHNPGQMGGTMRLGKRRTIFHSQNSVMKKLYGGHEYVEERHRHRYEVNPELRRELEARGLKFVGQDTEGERMEIVELEDHPYFVGVQYHPEFLSRPIKPSPPYFGLLLASVGRLSQYIERGCRLSPRDTYSDRSENSSPDAEIAELKLPMIDHE</sequence>
<name>PYG1B_XENLA</name>
<keyword id="KW-0067">ATP-binding</keyword>
<keyword id="KW-0315">Glutamine amidotransferase</keyword>
<keyword id="KW-0436">Ligase</keyword>
<keyword id="KW-0547">Nucleotide-binding</keyword>
<keyword id="KW-0665">Pyrimidine biosynthesis</keyword>
<keyword id="KW-1185">Reference proteome</keyword>